<proteinExistence type="inferred from homology"/>
<name>RS18_NOSP7</name>
<gene>
    <name evidence="1" type="primary">rpsR</name>
    <name evidence="1" type="synonym">rps18</name>
    <name type="ordered locus">Npun_R4940</name>
</gene>
<evidence type="ECO:0000255" key="1">
    <source>
        <dbReference type="HAMAP-Rule" id="MF_00270"/>
    </source>
</evidence>
<evidence type="ECO:0000305" key="2"/>
<feature type="chain" id="PRO_1000114433" description="Small ribosomal subunit protein bS18">
    <location>
        <begin position="1"/>
        <end position="71"/>
    </location>
</feature>
<keyword id="KW-1185">Reference proteome</keyword>
<keyword id="KW-0687">Ribonucleoprotein</keyword>
<keyword id="KW-0689">Ribosomal protein</keyword>
<keyword id="KW-0694">RNA-binding</keyword>
<keyword id="KW-0699">rRNA-binding</keyword>
<organism>
    <name type="scientific">Nostoc punctiforme (strain ATCC 29133 / PCC 73102)</name>
    <dbReference type="NCBI Taxonomy" id="63737"/>
    <lineage>
        <taxon>Bacteria</taxon>
        <taxon>Bacillati</taxon>
        <taxon>Cyanobacteriota</taxon>
        <taxon>Cyanophyceae</taxon>
        <taxon>Nostocales</taxon>
        <taxon>Nostocaceae</taxon>
        <taxon>Nostoc</taxon>
    </lineage>
</organism>
<reference key="1">
    <citation type="journal article" date="2013" name="Plant Physiol.">
        <title>A Nostoc punctiforme Sugar Transporter Necessary to Establish a Cyanobacterium-Plant Symbiosis.</title>
        <authorList>
            <person name="Ekman M."/>
            <person name="Picossi S."/>
            <person name="Campbell E.L."/>
            <person name="Meeks J.C."/>
            <person name="Flores E."/>
        </authorList>
    </citation>
    <scope>NUCLEOTIDE SEQUENCE [LARGE SCALE GENOMIC DNA]</scope>
    <source>
        <strain>ATCC 29133 / PCC 73102</strain>
    </source>
</reference>
<protein>
    <recommendedName>
        <fullName evidence="1">Small ribosomal subunit protein bS18</fullName>
    </recommendedName>
    <alternativeName>
        <fullName evidence="2">30S ribosomal protein S18</fullName>
    </alternativeName>
</protein>
<dbReference type="EMBL" id="CP001037">
    <property type="protein sequence ID" value="ACC83285.1"/>
    <property type="molecule type" value="Genomic_DNA"/>
</dbReference>
<dbReference type="RefSeq" id="WP_012411240.1">
    <property type="nucleotide sequence ID" value="NC_010628.1"/>
</dbReference>
<dbReference type="SMR" id="B2J0D3"/>
<dbReference type="STRING" id="63737.Npun_R4940"/>
<dbReference type="EnsemblBacteria" id="ACC83285">
    <property type="protein sequence ID" value="ACC83285"/>
    <property type="gene ID" value="Npun_R4940"/>
</dbReference>
<dbReference type="KEGG" id="npu:Npun_R4940"/>
<dbReference type="eggNOG" id="COG0238">
    <property type="taxonomic scope" value="Bacteria"/>
</dbReference>
<dbReference type="HOGENOM" id="CLU_148710_2_3_3"/>
<dbReference type="OrthoDB" id="9812008at2"/>
<dbReference type="PhylomeDB" id="B2J0D3"/>
<dbReference type="Proteomes" id="UP000001191">
    <property type="component" value="Chromosome"/>
</dbReference>
<dbReference type="GO" id="GO:0022627">
    <property type="term" value="C:cytosolic small ribosomal subunit"/>
    <property type="evidence" value="ECO:0007669"/>
    <property type="project" value="TreeGrafter"/>
</dbReference>
<dbReference type="GO" id="GO:0070181">
    <property type="term" value="F:small ribosomal subunit rRNA binding"/>
    <property type="evidence" value="ECO:0007669"/>
    <property type="project" value="TreeGrafter"/>
</dbReference>
<dbReference type="GO" id="GO:0003735">
    <property type="term" value="F:structural constituent of ribosome"/>
    <property type="evidence" value="ECO:0007669"/>
    <property type="project" value="InterPro"/>
</dbReference>
<dbReference type="GO" id="GO:0006412">
    <property type="term" value="P:translation"/>
    <property type="evidence" value="ECO:0007669"/>
    <property type="project" value="UniProtKB-UniRule"/>
</dbReference>
<dbReference type="FunFam" id="4.10.640.10:FF:000002">
    <property type="entry name" value="30S ribosomal protein S18, chloroplastic"/>
    <property type="match status" value="1"/>
</dbReference>
<dbReference type="Gene3D" id="4.10.640.10">
    <property type="entry name" value="Ribosomal protein S18"/>
    <property type="match status" value="1"/>
</dbReference>
<dbReference type="HAMAP" id="MF_00270">
    <property type="entry name" value="Ribosomal_bS18"/>
    <property type="match status" value="1"/>
</dbReference>
<dbReference type="InterPro" id="IPR001648">
    <property type="entry name" value="Ribosomal_bS18"/>
</dbReference>
<dbReference type="InterPro" id="IPR018275">
    <property type="entry name" value="Ribosomal_bS18_CS"/>
</dbReference>
<dbReference type="InterPro" id="IPR036870">
    <property type="entry name" value="Ribosomal_bS18_sf"/>
</dbReference>
<dbReference type="NCBIfam" id="TIGR00165">
    <property type="entry name" value="S18"/>
    <property type="match status" value="1"/>
</dbReference>
<dbReference type="PANTHER" id="PTHR13479">
    <property type="entry name" value="30S RIBOSOMAL PROTEIN S18"/>
    <property type="match status" value="1"/>
</dbReference>
<dbReference type="PANTHER" id="PTHR13479:SF40">
    <property type="entry name" value="SMALL RIBOSOMAL SUBUNIT PROTEIN BS18M"/>
    <property type="match status" value="1"/>
</dbReference>
<dbReference type="Pfam" id="PF01084">
    <property type="entry name" value="Ribosomal_S18"/>
    <property type="match status" value="1"/>
</dbReference>
<dbReference type="PRINTS" id="PR00974">
    <property type="entry name" value="RIBOSOMALS18"/>
</dbReference>
<dbReference type="SUPFAM" id="SSF46911">
    <property type="entry name" value="Ribosomal protein S18"/>
    <property type="match status" value="1"/>
</dbReference>
<dbReference type="PROSITE" id="PS00057">
    <property type="entry name" value="RIBOSOMAL_S18"/>
    <property type="match status" value="1"/>
</dbReference>
<comment type="function">
    <text evidence="1">Binds as a heterodimer with protein bS6 to the central domain of the 16S rRNA, where it helps stabilize the platform of the 30S subunit.</text>
</comment>
<comment type="subunit">
    <text evidence="1">Part of the 30S ribosomal subunit. Forms a tight heterodimer with protein bS6.</text>
</comment>
<comment type="similarity">
    <text evidence="1">Belongs to the bacterial ribosomal protein bS18 family.</text>
</comment>
<accession>B2J0D3</accession>
<sequence>MSYFRRRLSPIKPGEPIDYKDVDLLRKFVTERGKILPRRITGLTSQQQRELTLAIKRSRIVALLPFINAEG</sequence>